<dbReference type="EC" id="6.3.4.2" evidence="1"/>
<dbReference type="EMBL" id="CP001338">
    <property type="protein sequence ID" value="ACL15464.1"/>
    <property type="molecule type" value="Genomic_DNA"/>
</dbReference>
<dbReference type="RefSeq" id="WP_012616783.1">
    <property type="nucleotide sequence ID" value="NC_011832.1"/>
</dbReference>
<dbReference type="SMR" id="B8GIB3"/>
<dbReference type="STRING" id="521011.Mpal_0070"/>
<dbReference type="MEROPS" id="C26.964"/>
<dbReference type="GeneID" id="7272239"/>
<dbReference type="KEGG" id="mpl:Mpal_0070"/>
<dbReference type="eggNOG" id="arCOG00063">
    <property type="taxonomic scope" value="Archaea"/>
</dbReference>
<dbReference type="HOGENOM" id="CLU_011675_5_0_2"/>
<dbReference type="UniPathway" id="UPA00159">
    <property type="reaction ID" value="UER00277"/>
</dbReference>
<dbReference type="Proteomes" id="UP000002457">
    <property type="component" value="Chromosome"/>
</dbReference>
<dbReference type="GO" id="GO:0005524">
    <property type="term" value="F:ATP binding"/>
    <property type="evidence" value="ECO:0007669"/>
    <property type="project" value="UniProtKB-KW"/>
</dbReference>
<dbReference type="GO" id="GO:0003883">
    <property type="term" value="F:CTP synthase activity"/>
    <property type="evidence" value="ECO:0007669"/>
    <property type="project" value="UniProtKB-UniRule"/>
</dbReference>
<dbReference type="GO" id="GO:0004359">
    <property type="term" value="F:glutaminase activity"/>
    <property type="evidence" value="ECO:0007669"/>
    <property type="project" value="RHEA"/>
</dbReference>
<dbReference type="GO" id="GO:0042802">
    <property type="term" value="F:identical protein binding"/>
    <property type="evidence" value="ECO:0007669"/>
    <property type="project" value="TreeGrafter"/>
</dbReference>
<dbReference type="GO" id="GO:0046872">
    <property type="term" value="F:metal ion binding"/>
    <property type="evidence" value="ECO:0007669"/>
    <property type="project" value="UniProtKB-KW"/>
</dbReference>
<dbReference type="GO" id="GO:0044210">
    <property type="term" value="P:'de novo' CTP biosynthetic process"/>
    <property type="evidence" value="ECO:0007669"/>
    <property type="project" value="UniProtKB-UniRule"/>
</dbReference>
<dbReference type="GO" id="GO:0019856">
    <property type="term" value="P:pyrimidine nucleobase biosynthetic process"/>
    <property type="evidence" value="ECO:0007669"/>
    <property type="project" value="TreeGrafter"/>
</dbReference>
<dbReference type="CDD" id="cd03113">
    <property type="entry name" value="CTPS_N"/>
    <property type="match status" value="1"/>
</dbReference>
<dbReference type="CDD" id="cd01746">
    <property type="entry name" value="GATase1_CTP_Synthase"/>
    <property type="match status" value="1"/>
</dbReference>
<dbReference type="FunFam" id="3.40.50.300:FF:000009">
    <property type="entry name" value="CTP synthase"/>
    <property type="match status" value="1"/>
</dbReference>
<dbReference type="FunFam" id="3.40.50.880:FF:000002">
    <property type="entry name" value="CTP synthase"/>
    <property type="match status" value="1"/>
</dbReference>
<dbReference type="Gene3D" id="3.40.50.880">
    <property type="match status" value="1"/>
</dbReference>
<dbReference type="Gene3D" id="3.40.50.300">
    <property type="entry name" value="P-loop containing nucleotide triphosphate hydrolases"/>
    <property type="match status" value="1"/>
</dbReference>
<dbReference type="HAMAP" id="MF_01227">
    <property type="entry name" value="PyrG"/>
    <property type="match status" value="1"/>
</dbReference>
<dbReference type="InterPro" id="IPR029062">
    <property type="entry name" value="Class_I_gatase-like"/>
</dbReference>
<dbReference type="InterPro" id="IPR004468">
    <property type="entry name" value="CTP_synthase"/>
</dbReference>
<dbReference type="InterPro" id="IPR017456">
    <property type="entry name" value="CTP_synthase_N"/>
</dbReference>
<dbReference type="InterPro" id="IPR017926">
    <property type="entry name" value="GATASE"/>
</dbReference>
<dbReference type="InterPro" id="IPR033828">
    <property type="entry name" value="GATase1_CTP_Synthase"/>
</dbReference>
<dbReference type="InterPro" id="IPR027417">
    <property type="entry name" value="P-loop_NTPase"/>
</dbReference>
<dbReference type="NCBIfam" id="NF003792">
    <property type="entry name" value="PRK05380.1"/>
    <property type="match status" value="1"/>
</dbReference>
<dbReference type="NCBIfam" id="TIGR00337">
    <property type="entry name" value="PyrG"/>
    <property type="match status" value="1"/>
</dbReference>
<dbReference type="PANTHER" id="PTHR11550">
    <property type="entry name" value="CTP SYNTHASE"/>
    <property type="match status" value="1"/>
</dbReference>
<dbReference type="PANTHER" id="PTHR11550:SF0">
    <property type="entry name" value="CTP SYNTHASE-RELATED"/>
    <property type="match status" value="1"/>
</dbReference>
<dbReference type="Pfam" id="PF06418">
    <property type="entry name" value="CTP_synth_N"/>
    <property type="match status" value="1"/>
</dbReference>
<dbReference type="Pfam" id="PF00117">
    <property type="entry name" value="GATase"/>
    <property type="match status" value="1"/>
</dbReference>
<dbReference type="SUPFAM" id="SSF52317">
    <property type="entry name" value="Class I glutamine amidotransferase-like"/>
    <property type="match status" value="1"/>
</dbReference>
<dbReference type="SUPFAM" id="SSF52540">
    <property type="entry name" value="P-loop containing nucleoside triphosphate hydrolases"/>
    <property type="match status" value="1"/>
</dbReference>
<dbReference type="PROSITE" id="PS51273">
    <property type="entry name" value="GATASE_TYPE_1"/>
    <property type="match status" value="1"/>
</dbReference>
<feature type="chain" id="PRO_1000164950" description="CTP synthase">
    <location>
        <begin position="1"/>
        <end position="525"/>
    </location>
</feature>
<feature type="domain" description="Glutamine amidotransferase type-1" evidence="1">
    <location>
        <begin position="292"/>
        <end position="524"/>
    </location>
</feature>
<feature type="region of interest" description="Amidoligase domain" evidence="1">
    <location>
        <begin position="1"/>
        <end position="269"/>
    </location>
</feature>
<feature type="active site" description="Nucleophile; for glutamine hydrolysis" evidence="1">
    <location>
        <position position="375"/>
    </location>
</feature>
<feature type="active site" evidence="1">
    <location>
        <position position="497"/>
    </location>
</feature>
<feature type="active site" evidence="1">
    <location>
        <position position="499"/>
    </location>
</feature>
<feature type="binding site" evidence="1">
    <location>
        <position position="12"/>
    </location>
    <ligand>
        <name>CTP</name>
        <dbReference type="ChEBI" id="CHEBI:37563"/>
        <note>allosteric inhibitor</note>
    </ligand>
</feature>
<feature type="binding site" evidence="1">
    <location>
        <position position="12"/>
    </location>
    <ligand>
        <name>UTP</name>
        <dbReference type="ChEBI" id="CHEBI:46398"/>
    </ligand>
</feature>
<feature type="binding site" evidence="1">
    <location>
        <begin position="13"/>
        <end position="18"/>
    </location>
    <ligand>
        <name>ATP</name>
        <dbReference type="ChEBI" id="CHEBI:30616"/>
    </ligand>
</feature>
<feature type="binding site" evidence="1">
    <location>
        <position position="70"/>
    </location>
    <ligand>
        <name>ATP</name>
        <dbReference type="ChEBI" id="CHEBI:30616"/>
    </ligand>
</feature>
<feature type="binding site" evidence="1">
    <location>
        <position position="70"/>
    </location>
    <ligand>
        <name>Mg(2+)</name>
        <dbReference type="ChEBI" id="CHEBI:18420"/>
    </ligand>
</feature>
<feature type="binding site" evidence="1">
    <location>
        <position position="144"/>
    </location>
    <ligand>
        <name>Mg(2+)</name>
        <dbReference type="ChEBI" id="CHEBI:18420"/>
    </ligand>
</feature>
<feature type="binding site" evidence="1">
    <location>
        <begin position="151"/>
        <end position="153"/>
    </location>
    <ligand>
        <name>CTP</name>
        <dbReference type="ChEBI" id="CHEBI:37563"/>
        <note>allosteric inhibitor</note>
    </ligand>
</feature>
<feature type="binding site" evidence="1">
    <location>
        <begin position="190"/>
        <end position="195"/>
    </location>
    <ligand>
        <name>CTP</name>
        <dbReference type="ChEBI" id="CHEBI:37563"/>
        <note>allosteric inhibitor</note>
    </ligand>
</feature>
<feature type="binding site" evidence="1">
    <location>
        <begin position="190"/>
        <end position="195"/>
    </location>
    <ligand>
        <name>UTP</name>
        <dbReference type="ChEBI" id="CHEBI:46398"/>
    </ligand>
</feature>
<feature type="binding site" evidence="1">
    <location>
        <position position="226"/>
    </location>
    <ligand>
        <name>CTP</name>
        <dbReference type="ChEBI" id="CHEBI:37563"/>
        <note>allosteric inhibitor</note>
    </ligand>
</feature>
<feature type="binding site" evidence="1">
    <location>
        <position position="226"/>
    </location>
    <ligand>
        <name>UTP</name>
        <dbReference type="ChEBI" id="CHEBI:46398"/>
    </ligand>
</feature>
<feature type="binding site" evidence="1">
    <location>
        <position position="348"/>
    </location>
    <ligand>
        <name>L-glutamine</name>
        <dbReference type="ChEBI" id="CHEBI:58359"/>
    </ligand>
</feature>
<feature type="binding site" evidence="1">
    <location>
        <begin position="376"/>
        <end position="379"/>
    </location>
    <ligand>
        <name>L-glutamine</name>
        <dbReference type="ChEBI" id="CHEBI:58359"/>
    </ligand>
</feature>
<feature type="binding site" evidence="1">
    <location>
        <position position="399"/>
    </location>
    <ligand>
        <name>L-glutamine</name>
        <dbReference type="ChEBI" id="CHEBI:58359"/>
    </ligand>
</feature>
<feature type="binding site" evidence="1">
    <location>
        <position position="454"/>
    </location>
    <ligand>
        <name>L-glutamine</name>
        <dbReference type="ChEBI" id="CHEBI:58359"/>
    </ligand>
</feature>
<proteinExistence type="inferred from homology"/>
<keyword id="KW-0067">ATP-binding</keyword>
<keyword id="KW-0315">Glutamine amidotransferase</keyword>
<keyword id="KW-0436">Ligase</keyword>
<keyword id="KW-0460">Magnesium</keyword>
<keyword id="KW-0479">Metal-binding</keyword>
<keyword id="KW-0547">Nucleotide-binding</keyword>
<keyword id="KW-0665">Pyrimidine biosynthesis</keyword>
<keyword id="KW-1185">Reference proteome</keyword>
<sequence>MKYIIVTGGVMSGLGKGITAASIGRILKNRGYRVTAVKIDPYLNIDAGTMNPAQHGEVFVLGDGSEVDLDLGNYERFLDIELSGPHNITTGKVYRSVIEKERRGDYLGDTVQIIPHITDEIKCRIEQAATEGDENGAAEICLVEVGGTVGDIESMPFLEAVRQMRGELPEDEMVLIHVTLIPEDTMGDMKTKPTQHSVKALREAGLYADMIVGRSEHPIGLHTKRKIASFCDVAAQAVVSATTVPDIYQVPVELEKEGLADAITTHLHLDRREALEEWYNVVAREYTSRITVAIVSKYGIEDVYLSIKEALKHAGRALATEVKIVWLDAERYEPCQLADVDGILIPGGFGIRGIEGKIRAIQYAREHNIPFLGLCLGFQLAVVEFARHVLGWKDACSEEIGDGRHVIAILPEQEGVDDLGGTMRLGNYPVTVKAGTIAEQLYRRSTITERHRHRYEVNPEEISALEEAGLVFSGLNGPRMEICELPGHPFFFATQFHPEFRSRPTRPAPAFLGFVSACRKNKKTP</sequence>
<evidence type="ECO:0000255" key="1">
    <source>
        <dbReference type="HAMAP-Rule" id="MF_01227"/>
    </source>
</evidence>
<name>PYRG_METPE</name>
<organism>
    <name type="scientific">Methanosphaerula palustris (strain ATCC BAA-1556 / DSM 19958 / E1-9c)</name>
    <dbReference type="NCBI Taxonomy" id="521011"/>
    <lineage>
        <taxon>Archaea</taxon>
        <taxon>Methanobacteriati</taxon>
        <taxon>Methanobacteriota</taxon>
        <taxon>Stenosarchaea group</taxon>
        <taxon>Methanomicrobia</taxon>
        <taxon>Methanomicrobiales</taxon>
        <taxon>Methanoregulaceae</taxon>
        <taxon>Methanosphaerula</taxon>
    </lineage>
</organism>
<protein>
    <recommendedName>
        <fullName evidence="1">CTP synthase</fullName>
        <ecNumber evidence="1">6.3.4.2</ecNumber>
    </recommendedName>
    <alternativeName>
        <fullName evidence="1">Cytidine 5'-triphosphate synthase</fullName>
    </alternativeName>
    <alternativeName>
        <fullName evidence="1">Cytidine triphosphate synthetase</fullName>
        <shortName evidence="1">CTP synthetase</shortName>
        <shortName evidence="1">CTPS</shortName>
    </alternativeName>
    <alternativeName>
        <fullName evidence="1">UTP--ammonia ligase</fullName>
    </alternativeName>
</protein>
<accession>B8GIB3</accession>
<reference key="1">
    <citation type="journal article" date="2015" name="Genome Announc.">
        <title>Complete Genome Sequence of Methanosphaerula palustris E1-9CT, a Hydrogenotrophic Methanogen Isolated from a Minerotrophic Fen Peatland.</title>
        <authorList>
            <person name="Cadillo-Quiroz H."/>
            <person name="Browne P."/>
            <person name="Kyrpides N."/>
            <person name="Woyke T."/>
            <person name="Goodwin L."/>
            <person name="Detter C."/>
            <person name="Yavitt J.B."/>
            <person name="Zinder S.H."/>
        </authorList>
    </citation>
    <scope>NUCLEOTIDE SEQUENCE [LARGE SCALE GENOMIC DNA]</scope>
    <source>
        <strain>ATCC BAA-1556 / DSM 19958 / E1-9c</strain>
    </source>
</reference>
<gene>
    <name evidence="1" type="primary">pyrG</name>
    <name type="ordered locus">Mpal_0070</name>
</gene>
<comment type="function">
    <text evidence="1">Catalyzes the ATP-dependent amination of UTP to CTP with either L-glutamine or ammonia as the source of nitrogen. Regulates intracellular CTP levels through interactions with the four ribonucleotide triphosphates.</text>
</comment>
<comment type="catalytic activity">
    <reaction evidence="1">
        <text>UTP + L-glutamine + ATP + H2O = CTP + L-glutamate + ADP + phosphate + 2 H(+)</text>
        <dbReference type="Rhea" id="RHEA:26426"/>
        <dbReference type="ChEBI" id="CHEBI:15377"/>
        <dbReference type="ChEBI" id="CHEBI:15378"/>
        <dbReference type="ChEBI" id="CHEBI:29985"/>
        <dbReference type="ChEBI" id="CHEBI:30616"/>
        <dbReference type="ChEBI" id="CHEBI:37563"/>
        <dbReference type="ChEBI" id="CHEBI:43474"/>
        <dbReference type="ChEBI" id="CHEBI:46398"/>
        <dbReference type="ChEBI" id="CHEBI:58359"/>
        <dbReference type="ChEBI" id="CHEBI:456216"/>
        <dbReference type="EC" id="6.3.4.2"/>
    </reaction>
</comment>
<comment type="catalytic activity">
    <reaction evidence="1">
        <text>L-glutamine + H2O = L-glutamate + NH4(+)</text>
        <dbReference type="Rhea" id="RHEA:15889"/>
        <dbReference type="ChEBI" id="CHEBI:15377"/>
        <dbReference type="ChEBI" id="CHEBI:28938"/>
        <dbReference type="ChEBI" id="CHEBI:29985"/>
        <dbReference type="ChEBI" id="CHEBI:58359"/>
    </reaction>
</comment>
<comment type="catalytic activity">
    <reaction evidence="1">
        <text>UTP + NH4(+) + ATP = CTP + ADP + phosphate + 2 H(+)</text>
        <dbReference type="Rhea" id="RHEA:16597"/>
        <dbReference type="ChEBI" id="CHEBI:15378"/>
        <dbReference type="ChEBI" id="CHEBI:28938"/>
        <dbReference type="ChEBI" id="CHEBI:30616"/>
        <dbReference type="ChEBI" id="CHEBI:37563"/>
        <dbReference type="ChEBI" id="CHEBI:43474"/>
        <dbReference type="ChEBI" id="CHEBI:46398"/>
        <dbReference type="ChEBI" id="CHEBI:456216"/>
    </reaction>
</comment>
<comment type="activity regulation">
    <text evidence="1">Allosterically activated by GTP, when glutamine is the substrate; GTP has no effect on the reaction when ammonia is the substrate. The allosteric effector GTP functions by stabilizing the protein conformation that binds the tetrahedral intermediate(s) formed during glutamine hydrolysis. Inhibited by the product CTP, via allosteric rather than competitive inhibition.</text>
</comment>
<comment type="pathway">
    <text evidence="1">Pyrimidine metabolism; CTP biosynthesis via de novo pathway; CTP from UDP: step 2/2.</text>
</comment>
<comment type="subunit">
    <text evidence="1">Homotetramer.</text>
</comment>
<comment type="miscellaneous">
    <text evidence="1">CTPSs have evolved a hybrid strategy for distinguishing between UTP and CTP. The overlapping regions of the product feedback inhibitory and substrate sites recognize a common feature in both compounds, the triphosphate moiety. To differentiate isosteric substrate and product pyrimidine rings, an additional pocket far from the expected kinase/ligase catalytic site, specifically recognizes the cytosine and ribose portions of the product inhibitor.</text>
</comment>
<comment type="similarity">
    <text evidence="1">Belongs to the CTP synthase family.</text>
</comment>